<reference key="1">
    <citation type="submission" date="2006-08" db="EMBL/GenBank/DDBJ databases">
        <title>Cloning and bioinformatic analysis of cDNA encoding cattle Smad1 gene.</title>
        <authorList>
            <person name="Zhang X."/>
            <person name="Xu S."/>
        </authorList>
    </citation>
    <scope>NUCLEOTIDE SEQUENCE [MRNA]</scope>
</reference>
<reference key="2">
    <citation type="submission" date="2006-05" db="EMBL/GenBank/DDBJ databases">
        <authorList>
            <consortium name="NIH - Mammalian Gene Collection (MGC) project"/>
        </authorList>
    </citation>
    <scope>NUCLEOTIDE SEQUENCE [LARGE SCALE MRNA]</scope>
    <source>
        <strain>Hereford</strain>
        <tissue>Ascending colon</tissue>
    </source>
</reference>
<feature type="chain" id="PRO_0000260256" description="Mothers against decapentaplegic homolog 1">
    <location>
        <begin position="1"/>
        <end position="465"/>
    </location>
</feature>
<feature type="domain" description="MH1" evidence="4">
    <location>
        <begin position="12"/>
        <end position="136"/>
    </location>
</feature>
<feature type="domain" description="MH2" evidence="5">
    <location>
        <begin position="271"/>
        <end position="465"/>
    </location>
</feature>
<feature type="region of interest" description="Disordered" evidence="6">
    <location>
        <begin position="162"/>
        <end position="249"/>
    </location>
</feature>
<feature type="region of interest" description="L3 loop" evidence="3">
    <location>
        <begin position="418"/>
        <end position="428"/>
    </location>
</feature>
<feature type="compositionally biased region" description="Low complexity" evidence="6">
    <location>
        <begin position="179"/>
        <end position="210"/>
    </location>
</feature>
<feature type="compositionally biased region" description="Pro residues" evidence="6">
    <location>
        <begin position="221"/>
        <end position="232"/>
    </location>
</feature>
<feature type="binding site" evidence="1">
    <location>
        <position position="64"/>
    </location>
    <ligand>
        <name>Zn(2+)</name>
        <dbReference type="ChEBI" id="CHEBI:29105"/>
    </ligand>
</feature>
<feature type="binding site" evidence="1">
    <location>
        <position position="109"/>
    </location>
    <ligand>
        <name>Zn(2+)</name>
        <dbReference type="ChEBI" id="CHEBI:29105"/>
    </ligand>
</feature>
<feature type="binding site" evidence="1">
    <location>
        <position position="121"/>
    </location>
    <ligand>
        <name>Zn(2+)</name>
        <dbReference type="ChEBI" id="CHEBI:29105"/>
    </ligand>
</feature>
<feature type="binding site" evidence="1">
    <location>
        <position position="126"/>
    </location>
    <ligand>
        <name>Zn(2+)</name>
        <dbReference type="ChEBI" id="CHEBI:29105"/>
    </ligand>
</feature>
<feature type="modified residue" description="N-acetylmethionine" evidence="3">
    <location>
        <position position="1"/>
    </location>
</feature>
<feature type="modified residue" description="Phosphothreonine; by MINK1, TNIK and MAP4K4" evidence="3">
    <location>
        <position position="322"/>
    </location>
</feature>
<feature type="modified residue" description="Phosphoserine" evidence="3 5">
    <location>
        <position position="463"/>
    </location>
</feature>
<feature type="modified residue" description="Phosphoserine" evidence="3 5">
    <location>
        <position position="465"/>
    </location>
</feature>
<feature type="sequence conflict" description="In Ref. 1; ABI96185." evidence="7" ref="1">
    <original>S</original>
    <variation>G</variation>
    <location>
        <position position="62"/>
    </location>
</feature>
<accession>Q1JQA2</accession>
<accession>Q06AL6</accession>
<proteinExistence type="evidence at transcript level"/>
<comment type="function">
    <text evidence="2 3">Transcriptional modulator that plays a role in various cellular processes, including embryonic development, cell differentiation, and tissue homeostasis. Upon BMP ligand binding to their receptors at the cell surface, is phosphorylated by activated type I BMP receptors (BMPRIs) and associates with SMAD4 to form an heteromeric complex which translocates into the nucleus acting as transcription factor. In turn, the hetero-trimeric complex recognizes cis-regulatory elements containing Smad Binding Elements (SBEs) to modulate the outcome of the signaling network. SMAD1/OAZ1/PSMB4 complex mediates the degradation of the CREBBP/EP300 repressor SNIP1. Positively regulates BMP4-induced expression of odontogenic development regulator MSX1 following IPO7-mediated nuclear import (By similarity).</text>
</comment>
<comment type="subunit">
    <text evidence="2 3">Found in a complex with SMAD4 and YY1. Interacts with HGS, NANOG and ZCCHC12 (By similarity). Upon C-terminus phosphorylation: forms trimers with another SMAD1 and the co-SMAD SMAD4 (By similarity). Interacts with PEBP2-alpha subunit, CREB-binding protein (CBP), p300, SMURF1, SMURF2, USP15 and HOXC8. Associates with ZNF423 or ZNF521 in response to BMP2 leading to activate transcription of BMP target genes. Interacts with SKOR1. Interacts (via MH2 domain) with LEMD3. Binding to LEMD3 results in at least a partial reduction of receptor-mediated phosphorylation. Forms a ternary complex with PSMB4 and OAZ1 before PSMB4 is incorporated into the 20S proteasome. Interacts (via MH2 domain) with FAM83G (via MH2 domain); in a SMAD4-independent manner. Interacts with ZC3H3 (By similarity). Interacts with TMEM119 (By similarity). Interacts (via MH1 and MH2 domains) with ZNF8 (By similarity). Interacts with RANBP3L; the interaction increases when SMAD1 is not phosphorylated and mediates SMAD1 nuclear export. Interacts with EGR1; this interaction inhibits SMAD1 dephosphorylation (By similarity). Interacts with SMAD6. Interacts with YAP1 (By similarity). Interacts with MTMR4; negatively regulates BMP signaling through SMAD1 dephosphorylation and retention in endosomes (By similarity).</text>
</comment>
<comment type="subcellular location">
    <subcellularLocation>
        <location evidence="3">Cytoplasm</location>
    </subcellularLocation>
    <subcellularLocation>
        <location evidence="3">Nucleus</location>
    </subcellularLocation>
    <text evidence="2 3">Cytoplasmic in the absence of ligand. Migrates to the nucleus when complexed with SMAD4. Co-localizes with LEMD3 at the nucleus inner membrane (By similarity). Exported from the nucleus to the cytoplasm when dephosphorylated (By similarity).</text>
</comment>
<comment type="domain">
    <text evidence="3">The MH2 domain mediates phosphorylation-dependent trimerization through L3 loop binding of phosphoserines in the adjacent subunit.</text>
</comment>
<comment type="PTM">
    <text evidence="3">Phosphorylation of the C-terminal SVS motif by BMP type 1 receptor kinase activates SMAD1 by promoting dissociation from the receptor and trimerization with SMAD4. Phosphorylation by ERK2 MAP kinase in response to EGF or HGF prevents SMAD1 nuclear accumulation and transcriptional activity in response to BMP (By similarity). Dephosphorylation, probably by PPM1A, induces its export from the nucleus to the cytoplasm (By similarity). Dephosphorylation is inhibited by association with EGR1 (By similarity). Phosphorylation by CDK8/9 creates binding sites for YAP1, and subsequent phosphorylation by GSK3 switches off YAP1 binding and adds binding sites for SMURF1 (By similarity).</text>
</comment>
<comment type="PTM">
    <text evidence="2 3">Ubiquitinated by SMAD-specific E3 ubiquitin ligase SMURF1, leading to its degradation. Monoubiquitinated, leading to prevent DNA-binding. Deubiquitination by USP15 alleviates inhibition and promotes activation of TGF-beta target genes. Dephosphorylation, probably by PPM1A, induces its export from the nucleus to the cytoplasm (By similarity). Phospho-SMAD1 is ubiquitinated by CHIP leading to disruption of the SMAD1-SMAD4 complex (By similarity).</text>
</comment>
<comment type="similarity">
    <text evidence="7">Belongs to the dwarfin/SMAD family.</text>
</comment>
<name>SMAD1_BOVIN</name>
<gene>
    <name type="primary">SMAD1</name>
</gene>
<sequence>MNVTSLFSFTSPAVKRLLGWKQGDEEEKWAEKAVDALVKKLKKKKGAMEELEKALSCPGQPSNCVTIPRSLDGRLQVSHRKGLPHVIYCRVWRWPDLQSHHELKPLECCEFPFGSKQKEVCINPYHYKRVESPVLPPVLVPRHSEYNPQHSLLAQFRNLGQNEPHMPLNATFPDSFQQPNSHPFPHSPNSSYPNSPGSSSSTYPHSPTSSDPGSPFQMPADTPPPAYLPPEDPMTQDGSQPMDTNMMAPSLPSEINRGDVQAVAYEEPKHWCSIVYYELNNRVGEAFHASSTSVLVDGFTDPSNNKNRFCLGLLSNVNRNSTIENTRRHIGKGVHLYYVGGEVYAECLSDSSIFVQSRNCNYHHGFHPTTVCKIPSGCSLKIFNNQEFAQLLAQSVNHGFETVYELTKMCTIRMSFVKGWGAEYHRQDVTSTPCWIEIHLHGPLQWLDKVLTQMGSPHNPISSVS</sequence>
<keyword id="KW-0007">Acetylation</keyword>
<keyword id="KW-0963">Cytoplasm</keyword>
<keyword id="KW-0238">DNA-binding</keyword>
<keyword id="KW-0479">Metal-binding</keyword>
<keyword id="KW-0539">Nucleus</keyword>
<keyword id="KW-0597">Phosphoprotein</keyword>
<keyword id="KW-1185">Reference proteome</keyword>
<keyword id="KW-0804">Transcription</keyword>
<keyword id="KW-0805">Transcription regulation</keyword>
<keyword id="KW-0832">Ubl conjugation</keyword>
<keyword id="KW-0862">Zinc</keyword>
<organism>
    <name type="scientific">Bos taurus</name>
    <name type="common">Bovine</name>
    <dbReference type="NCBI Taxonomy" id="9913"/>
    <lineage>
        <taxon>Eukaryota</taxon>
        <taxon>Metazoa</taxon>
        <taxon>Chordata</taxon>
        <taxon>Craniata</taxon>
        <taxon>Vertebrata</taxon>
        <taxon>Euteleostomi</taxon>
        <taxon>Mammalia</taxon>
        <taxon>Eutheria</taxon>
        <taxon>Laurasiatheria</taxon>
        <taxon>Artiodactyla</taxon>
        <taxon>Ruminantia</taxon>
        <taxon>Pecora</taxon>
        <taxon>Bovidae</taxon>
        <taxon>Bovinae</taxon>
        <taxon>Bos</taxon>
    </lineage>
</organism>
<protein>
    <recommendedName>
        <fullName>Mothers against decapentaplegic homolog 1</fullName>
        <shortName>MAD homolog 1</shortName>
        <shortName>Mothers against DPP homolog 1</shortName>
    </recommendedName>
    <alternativeName>
        <fullName>SMAD family member 1</fullName>
        <shortName>SMAD 1</shortName>
        <shortName>Smad1</shortName>
    </alternativeName>
</protein>
<evidence type="ECO:0000250" key="1"/>
<evidence type="ECO:0000250" key="2">
    <source>
        <dbReference type="UniProtKB" id="P70340"/>
    </source>
</evidence>
<evidence type="ECO:0000250" key="3">
    <source>
        <dbReference type="UniProtKB" id="Q15797"/>
    </source>
</evidence>
<evidence type="ECO:0000255" key="4">
    <source>
        <dbReference type="PROSITE-ProRule" id="PRU00438"/>
    </source>
</evidence>
<evidence type="ECO:0000255" key="5">
    <source>
        <dbReference type="PROSITE-ProRule" id="PRU00439"/>
    </source>
</evidence>
<evidence type="ECO:0000256" key="6">
    <source>
        <dbReference type="SAM" id="MobiDB-lite"/>
    </source>
</evidence>
<evidence type="ECO:0000305" key="7"/>
<dbReference type="EMBL" id="DQ922947">
    <property type="protein sequence ID" value="ABI96185.1"/>
    <property type="molecule type" value="mRNA"/>
</dbReference>
<dbReference type="EMBL" id="BC116117">
    <property type="protein sequence ID" value="AAI16118.1"/>
    <property type="molecule type" value="mRNA"/>
</dbReference>
<dbReference type="RefSeq" id="NP_001069691.2">
    <property type="nucleotide sequence ID" value="NM_001076223.2"/>
</dbReference>
<dbReference type="RefSeq" id="XP_005217566.1">
    <property type="nucleotide sequence ID" value="XM_005217509.4"/>
</dbReference>
<dbReference type="RefSeq" id="XP_005217568.1">
    <property type="nucleotide sequence ID" value="XM_005217511.4"/>
</dbReference>
<dbReference type="RefSeq" id="XP_010812017.1">
    <property type="nucleotide sequence ID" value="XM_010813715.2"/>
</dbReference>
<dbReference type="RefSeq" id="XP_010812018.1">
    <property type="nucleotide sequence ID" value="XM_010813716.4"/>
</dbReference>
<dbReference type="RefSeq" id="XP_024833174.1">
    <property type="nucleotide sequence ID" value="XM_024977406.2"/>
</dbReference>
<dbReference type="RefSeq" id="XP_059732116.1">
    <property type="nucleotide sequence ID" value="XM_059876133.1"/>
</dbReference>
<dbReference type="SMR" id="Q1JQA2"/>
<dbReference type="FunCoup" id="Q1JQA2">
    <property type="interactions" value="2255"/>
</dbReference>
<dbReference type="STRING" id="9913.ENSBTAP00000074456"/>
<dbReference type="PaxDb" id="9913-ENSBTAP00000003668"/>
<dbReference type="Ensembl" id="ENSBTAT00000003668.7">
    <property type="protein sequence ID" value="ENSBTAP00000003668.5"/>
    <property type="gene ID" value="ENSBTAG00000002835.7"/>
</dbReference>
<dbReference type="GeneID" id="540488"/>
<dbReference type="KEGG" id="bta:540488"/>
<dbReference type="CTD" id="4086"/>
<dbReference type="VEuPathDB" id="HostDB:ENSBTAG00000002835"/>
<dbReference type="VGNC" id="VGNC:34974">
    <property type="gene designation" value="SMAD1"/>
</dbReference>
<dbReference type="eggNOG" id="KOG3701">
    <property type="taxonomic scope" value="Eukaryota"/>
</dbReference>
<dbReference type="GeneTree" id="ENSGT00940000154391"/>
<dbReference type="HOGENOM" id="CLU_026736_0_2_1"/>
<dbReference type="InParanoid" id="Q1JQA2"/>
<dbReference type="OMA" id="FIQSRNC"/>
<dbReference type="OrthoDB" id="5794312at2759"/>
<dbReference type="TreeFam" id="TF314923"/>
<dbReference type="Reactome" id="R-BTA-201451">
    <property type="pathway name" value="Signaling by BMP"/>
</dbReference>
<dbReference type="Reactome" id="R-BTA-5689880">
    <property type="pathway name" value="Ub-specific processing proteases"/>
</dbReference>
<dbReference type="Reactome" id="R-BTA-8941326">
    <property type="pathway name" value="RUNX2 regulates bone development"/>
</dbReference>
<dbReference type="Proteomes" id="UP000009136">
    <property type="component" value="Chromosome 17"/>
</dbReference>
<dbReference type="Bgee" id="ENSBTAG00000002835">
    <property type="expression patterns" value="Expressed in abomasum and 104 other cell types or tissues"/>
</dbReference>
<dbReference type="GO" id="GO:0000785">
    <property type="term" value="C:chromatin"/>
    <property type="evidence" value="ECO:0007669"/>
    <property type="project" value="Ensembl"/>
</dbReference>
<dbReference type="GO" id="GO:0071144">
    <property type="term" value="C:heteromeric SMAD protein complex"/>
    <property type="evidence" value="ECO:0000318"/>
    <property type="project" value="GO_Central"/>
</dbReference>
<dbReference type="GO" id="GO:0071142">
    <property type="term" value="C:homomeric SMAD protein complex"/>
    <property type="evidence" value="ECO:0007669"/>
    <property type="project" value="Ensembl"/>
</dbReference>
<dbReference type="GO" id="GO:0001673">
    <property type="term" value="C:male germ cell nucleus"/>
    <property type="evidence" value="ECO:0007669"/>
    <property type="project" value="Ensembl"/>
</dbReference>
<dbReference type="GO" id="GO:0005637">
    <property type="term" value="C:nuclear inner membrane"/>
    <property type="evidence" value="ECO:0007669"/>
    <property type="project" value="Ensembl"/>
</dbReference>
<dbReference type="GO" id="GO:0005634">
    <property type="term" value="C:nucleus"/>
    <property type="evidence" value="ECO:0000250"/>
    <property type="project" value="UniProtKB"/>
</dbReference>
<dbReference type="GO" id="GO:0070410">
    <property type="term" value="F:co-SMAD binding"/>
    <property type="evidence" value="ECO:0007669"/>
    <property type="project" value="Ensembl"/>
</dbReference>
<dbReference type="GO" id="GO:0017151">
    <property type="term" value="F:DEAD/H-box RNA helicase binding"/>
    <property type="evidence" value="ECO:0007669"/>
    <property type="project" value="Ensembl"/>
</dbReference>
<dbReference type="GO" id="GO:0001228">
    <property type="term" value="F:DNA-binding transcription activator activity, RNA polymerase II-specific"/>
    <property type="evidence" value="ECO:0007669"/>
    <property type="project" value="Ensembl"/>
</dbReference>
<dbReference type="GO" id="GO:0000981">
    <property type="term" value="F:DNA-binding transcription factor activity, RNA polymerase II-specific"/>
    <property type="evidence" value="ECO:0000318"/>
    <property type="project" value="GO_Central"/>
</dbReference>
<dbReference type="GO" id="GO:0070411">
    <property type="term" value="F:I-SMAD binding"/>
    <property type="evidence" value="ECO:0000318"/>
    <property type="project" value="GO_Central"/>
</dbReference>
<dbReference type="GO" id="GO:0042802">
    <property type="term" value="F:identical protein binding"/>
    <property type="evidence" value="ECO:0007669"/>
    <property type="project" value="Ensembl"/>
</dbReference>
<dbReference type="GO" id="GO:0046872">
    <property type="term" value="F:metal ion binding"/>
    <property type="evidence" value="ECO:0007669"/>
    <property type="project" value="UniProtKB-KW"/>
</dbReference>
<dbReference type="GO" id="GO:0070878">
    <property type="term" value="F:primary miRNA binding"/>
    <property type="evidence" value="ECO:0007669"/>
    <property type="project" value="Ensembl"/>
</dbReference>
<dbReference type="GO" id="GO:0019901">
    <property type="term" value="F:protein kinase binding"/>
    <property type="evidence" value="ECO:0007669"/>
    <property type="project" value="Ensembl"/>
</dbReference>
<dbReference type="GO" id="GO:0000978">
    <property type="term" value="F:RNA polymerase II cis-regulatory region sequence-specific DNA binding"/>
    <property type="evidence" value="ECO:0000318"/>
    <property type="project" value="GO_Central"/>
</dbReference>
<dbReference type="GO" id="GO:0031625">
    <property type="term" value="F:ubiquitin protein ligase binding"/>
    <property type="evidence" value="ECO:0007669"/>
    <property type="project" value="Ensembl"/>
</dbReference>
<dbReference type="GO" id="GO:0009653">
    <property type="term" value="P:anatomical structure morphogenesis"/>
    <property type="evidence" value="ECO:0000318"/>
    <property type="project" value="GO_Central"/>
</dbReference>
<dbReference type="GO" id="GO:0030509">
    <property type="term" value="P:BMP signaling pathway"/>
    <property type="evidence" value="ECO:0000318"/>
    <property type="project" value="GO_Central"/>
</dbReference>
<dbReference type="GO" id="GO:0060348">
    <property type="term" value="P:bone development"/>
    <property type="evidence" value="ECO:0007669"/>
    <property type="project" value="Ensembl"/>
</dbReference>
<dbReference type="GO" id="GO:0060038">
    <property type="term" value="P:cardiac muscle cell proliferation"/>
    <property type="evidence" value="ECO:0007669"/>
    <property type="project" value="Ensembl"/>
</dbReference>
<dbReference type="GO" id="GO:0051216">
    <property type="term" value="P:cartilage development"/>
    <property type="evidence" value="ECO:0007669"/>
    <property type="project" value="Ensembl"/>
</dbReference>
<dbReference type="GO" id="GO:0030154">
    <property type="term" value="P:cell differentiation"/>
    <property type="evidence" value="ECO:0000318"/>
    <property type="project" value="GO_Central"/>
</dbReference>
<dbReference type="GO" id="GO:0007276">
    <property type="term" value="P:gamete generation"/>
    <property type="evidence" value="ECO:0007669"/>
    <property type="project" value="Ensembl"/>
</dbReference>
<dbReference type="GO" id="GO:0030902">
    <property type="term" value="P:hindbrain development"/>
    <property type="evidence" value="ECO:0007669"/>
    <property type="project" value="Ensembl"/>
</dbReference>
<dbReference type="GO" id="GO:0006954">
    <property type="term" value="P:inflammatory response"/>
    <property type="evidence" value="ECO:0007669"/>
    <property type="project" value="Ensembl"/>
</dbReference>
<dbReference type="GO" id="GO:0006879">
    <property type="term" value="P:intracellular iron ion homeostasis"/>
    <property type="evidence" value="ECO:0007669"/>
    <property type="project" value="Ensembl"/>
</dbReference>
<dbReference type="GO" id="GO:0000165">
    <property type="term" value="P:MAPK cascade"/>
    <property type="evidence" value="ECO:0007669"/>
    <property type="project" value="Ensembl"/>
</dbReference>
<dbReference type="GO" id="GO:0001710">
    <property type="term" value="P:mesodermal cell fate commitment"/>
    <property type="evidence" value="ECO:0007669"/>
    <property type="project" value="Ensembl"/>
</dbReference>
<dbReference type="GO" id="GO:0030901">
    <property type="term" value="P:midbrain development"/>
    <property type="evidence" value="ECO:0007669"/>
    <property type="project" value="Ensembl"/>
</dbReference>
<dbReference type="GO" id="GO:0008285">
    <property type="term" value="P:negative regulation of cell population proliferation"/>
    <property type="evidence" value="ECO:0007669"/>
    <property type="project" value="Ensembl"/>
</dbReference>
<dbReference type="GO" id="GO:0051148">
    <property type="term" value="P:negative regulation of muscle cell differentiation"/>
    <property type="evidence" value="ECO:0007669"/>
    <property type="project" value="Ensembl"/>
</dbReference>
<dbReference type="GO" id="GO:0002051">
    <property type="term" value="P:osteoblast fate commitment"/>
    <property type="evidence" value="ECO:0007669"/>
    <property type="project" value="Ensembl"/>
</dbReference>
<dbReference type="GO" id="GO:0061036">
    <property type="term" value="P:positive regulation of cartilage development"/>
    <property type="evidence" value="ECO:0007669"/>
    <property type="project" value="Ensembl"/>
</dbReference>
<dbReference type="GO" id="GO:0010628">
    <property type="term" value="P:positive regulation of gene expression"/>
    <property type="evidence" value="ECO:0007669"/>
    <property type="project" value="Ensembl"/>
</dbReference>
<dbReference type="GO" id="GO:1902895">
    <property type="term" value="P:positive regulation of miRNA transcription"/>
    <property type="evidence" value="ECO:0007669"/>
    <property type="project" value="Ensembl"/>
</dbReference>
<dbReference type="GO" id="GO:0045669">
    <property type="term" value="P:positive regulation of osteoblast differentiation"/>
    <property type="evidence" value="ECO:0007669"/>
    <property type="project" value="Ensembl"/>
</dbReference>
<dbReference type="GO" id="GO:1903672">
    <property type="term" value="P:positive regulation of sprouting angiogenesis"/>
    <property type="evidence" value="ECO:0007669"/>
    <property type="project" value="Ensembl"/>
</dbReference>
<dbReference type="GO" id="GO:0045944">
    <property type="term" value="P:positive regulation of transcription by RNA polymerase II"/>
    <property type="evidence" value="ECO:0000250"/>
    <property type="project" value="UniProtKB"/>
</dbReference>
<dbReference type="GO" id="GO:0006357">
    <property type="term" value="P:regulation of transcription by RNA polymerase II"/>
    <property type="evidence" value="ECO:0000318"/>
    <property type="project" value="GO_Central"/>
</dbReference>
<dbReference type="GO" id="GO:0060395">
    <property type="term" value="P:SMAD protein signal transduction"/>
    <property type="evidence" value="ECO:0000318"/>
    <property type="project" value="GO_Central"/>
</dbReference>
<dbReference type="GO" id="GO:0048863">
    <property type="term" value="P:stem cell differentiation"/>
    <property type="evidence" value="ECO:0007669"/>
    <property type="project" value="Ensembl"/>
</dbReference>
<dbReference type="GO" id="GO:0006366">
    <property type="term" value="P:transcription by RNA polymerase II"/>
    <property type="evidence" value="ECO:0007669"/>
    <property type="project" value="Ensembl"/>
</dbReference>
<dbReference type="GO" id="GO:0007179">
    <property type="term" value="P:transforming growth factor beta receptor signaling pathway"/>
    <property type="evidence" value="ECO:0000318"/>
    <property type="project" value="GO_Central"/>
</dbReference>
<dbReference type="GO" id="GO:0001657">
    <property type="term" value="P:ureteric bud development"/>
    <property type="evidence" value="ECO:0007669"/>
    <property type="project" value="Ensembl"/>
</dbReference>
<dbReference type="CDD" id="cd10490">
    <property type="entry name" value="MH1_SMAD_1_5_9"/>
    <property type="match status" value="1"/>
</dbReference>
<dbReference type="CDD" id="cd10497">
    <property type="entry name" value="MH2_SMAD_1_5_9"/>
    <property type="match status" value="1"/>
</dbReference>
<dbReference type="FunFam" id="2.60.200.10:FF:000001">
    <property type="entry name" value="Mothers against decapentaplegic homolog"/>
    <property type="match status" value="1"/>
</dbReference>
<dbReference type="FunFam" id="3.90.520.10:FF:000001">
    <property type="entry name" value="Mothers against decapentaplegic homolog"/>
    <property type="match status" value="1"/>
</dbReference>
<dbReference type="Gene3D" id="2.60.200.10">
    <property type="match status" value="1"/>
</dbReference>
<dbReference type="Gene3D" id="3.90.520.10">
    <property type="entry name" value="SMAD MH1 domain"/>
    <property type="match status" value="1"/>
</dbReference>
<dbReference type="InterPro" id="IPR013790">
    <property type="entry name" value="Dwarfin"/>
</dbReference>
<dbReference type="InterPro" id="IPR003619">
    <property type="entry name" value="MAD_homology1_Dwarfin-type"/>
</dbReference>
<dbReference type="InterPro" id="IPR013019">
    <property type="entry name" value="MAD_homology_MH1"/>
</dbReference>
<dbReference type="InterPro" id="IPR017855">
    <property type="entry name" value="SMAD-like_dom_sf"/>
</dbReference>
<dbReference type="InterPro" id="IPR001132">
    <property type="entry name" value="SMAD_dom_Dwarfin-type"/>
</dbReference>
<dbReference type="InterPro" id="IPR008984">
    <property type="entry name" value="SMAD_FHA_dom_sf"/>
</dbReference>
<dbReference type="InterPro" id="IPR036578">
    <property type="entry name" value="SMAD_MH1_sf"/>
</dbReference>
<dbReference type="PANTHER" id="PTHR13703:SF23">
    <property type="entry name" value="MOTHERS AGAINST DECAPENTAPLEGIC HOMOLOG 1"/>
    <property type="match status" value="1"/>
</dbReference>
<dbReference type="PANTHER" id="PTHR13703">
    <property type="entry name" value="SMAD"/>
    <property type="match status" value="1"/>
</dbReference>
<dbReference type="Pfam" id="PF03165">
    <property type="entry name" value="MH1"/>
    <property type="match status" value="1"/>
</dbReference>
<dbReference type="Pfam" id="PF03166">
    <property type="entry name" value="MH2"/>
    <property type="match status" value="1"/>
</dbReference>
<dbReference type="SMART" id="SM00523">
    <property type="entry name" value="DWA"/>
    <property type="match status" value="1"/>
</dbReference>
<dbReference type="SMART" id="SM00524">
    <property type="entry name" value="DWB"/>
    <property type="match status" value="1"/>
</dbReference>
<dbReference type="SUPFAM" id="SSF56366">
    <property type="entry name" value="SMAD MH1 domain"/>
    <property type="match status" value="1"/>
</dbReference>
<dbReference type="SUPFAM" id="SSF49879">
    <property type="entry name" value="SMAD/FHA domain"/>
    <property type="match status" value="1"/>
</dbReference>
<dbReference type="PROSITE" id="PS51075">
    <property type="entry name" value="MH1"/>
    <property type="match status" value="1"/>
</dbReference>
<dbReference type="PROSITE" id="PS51076">
    <property type="entry name" value="MH2"/>
    <property type="match status" value="1"/>
</dbReference>